<keyword id="KW-0687">Ribonucleoprotein</keyword>
<keyword id="KW-0689">Ribosomal protein</keyword>
<keyword id="KW-0694">RNA-binding</keyword>
<keyword id="KW-0699">rRNA-binding</keyword>
<accession>B0V6W9</accession>
<name>RL4_ACIBY</name>
<protein>
    <recommendedName>
        <fullName evidence="1">Large ribosomal subunit protein uL4</fullName>
    </recommendedName>
    <alternativeName>
        <fullName evidence="3">50S ribosomal protein L4</fullName>
    </alternativeName>
</protein>
<proteinExistence type="inferred from homology"/>
<sequence length="200" mass="21552">MNLKTVSGSAVELSEVAFGREFNEALVHQVVTAYLAGGRQGTRAHKSRADVSGGGKKPFRQKGTGRARAGSIRSPIWVGGGKTFAARPQDWSQKVNRKMYRGAMQCILAELVRQDRLVLVEEFAVAAPKTKELLAKLNDLNAARALIVTDAVDENLYLAARNLPHVDVVDATAIDPVSLIAFDKVVMSVAAAKKIEVELG</sequence>
<comment type="function">
    <text evidence="1">One of the primary rRNA binding proteins, this protein initially binds near the 5'-end of the 23S rRNA. It is important during the early stages of 50S assembly. It makes multiple contacts with different domains of the 23S rRNA in the assembled 50S subunit and ribosome.</text>
</comment>
<comment type="function">
    <text evidence="1">Forms part of the polypeptide exit tunnel.</text>
</comment>
<comment type="subunit">
    <text evidence="1">Part of the 50S ribosomal subunit.</text>
</comment>
<comment type="similarity">
    <text evidence="1">Belongs to the universal ribosomal protein uL4 family.</text>
</comment>
<dbReference type="EMBL" id="CU459141">
    <property type="protein sequence ID" value="CAM85383.1"/>
    <property type="molecule type" value="Genomic_DNA"/>
</dbReference>
<dbReference type="RefSeq" id="WP_001050255.1">
    <property type="nucleotide sequence ID" value="NZ_JBDGFB010000011.1"/>
</dbReference>
<dbReference type="SMR" id="B0V6W9"/>
<dbReference type="EnsemblBacteria" id="CAM85383">
    <property type="protein sequence ID" value="CAM85383"/>
    <property type="gene ID" value="ABAYE0409"/>
</dbReference>
<dbReference type="GeneID" id="92895316"/>
<dbReference type="KEGG" id="aby:ABAYE0409"/>
<dbReference type="HOGENOM" id="CLU_041575_5_2_6"/>
<dbReference type="GO" id="GO:1990904">
    <property type="term" value="C:ribonucleoprotein complex"/>
    <property type="evidence" value="ECO:0007669"/>
    <property type="project" value="UniProtKB-KW"/>
</dbReference>
<dbReference type="GO" id="GO:0005840">
    <property type="term" value="C:ribosome"/>
    <property type="evidence" value="ECO:0007669"/>
    <property type="project" value="UniProtKB-KW"/>
</dbReference>
<dbReference type="GO" id="GO:0019843">
    <property type="term" value="F:rRNA binding"/>
    <property type="evidence" value="ECO:0007669"/>
    <property type="project" value="UniProtKB-UniRule"/>
</dbReference>
<dbReference type="GO" id="GO:0003735">
    <property type="term" value="F:structural constituent of ribosome"/>
    <property type="evidence" value="ECO:0007669"/>
    <property type="project" value="InterPro"/>
</dbReference>
<dbReference type="GO" id="GO:0006412">
    <property type="term" value="P:translation"/>
    <property type="evidence" value="ECO:0007669"/>
    <property type="project" value="UniProtKB-UniRule"/>
</dbReference>
<dbReference type="Gene3D" id="3.40.1370.10">
    <property type="match status" value="1"/>
</dbReference>
<dbReference type="HAMAP" id="MF_01328_B">
    <property type="entry name" value="Ribosomal_uL4_B"/>
    <property type="match status" value="1"/>
</dbReference>
<dbReference type="InterPro" id="IPR002136">
    <property type="entry name" value="Ribosomal_uL4"/>
</dbReference>
<dbReference type="InterPro" id="IPR013005">
    <property type="entry name" value="Ribosomal_uL4-like"/>
</dbReference>
<dbReference type="InterPro" id="IPR023574">
    <property type="entry name" value="Ribosomal_uL4_dom_sf"/>
</dbReference>
<dbReference type="NCBIfam" id="TIGR03953">
    <property type="entry name" value="rplD_bact"/>
    <property type="match status" value="1"/>
</dbReference>
<dbReference type="PANTHER" id="PTHR10746">
    <property type="entry name" value="50S RIBOSOMAL PROTEIN L4"/>
    <property type="match status" value="1"/>
</dbReference>
<dbReference type="PANTHER" id="PTHR10746:SF6">
    <property type="entry name" value="LARGE RIBOSOMAL SUBUNIT PROTEIN UL4M"/>
    <property type="match status" value="1"/>
</dbReference>
<dbReference type="Pfam" id="PF00573">
    <property type="entry name" value="Ribosomal_L4"/>
    <property type="match status" value="1"/>
</dbReference>
<dbReference type="SUPFAM" id="SSF52166">
    <property type="entry name" value="Ribosomal protein L4"/>
    <property type="match status" value="1"/>
</dbReference>
<reference key="1">
    <citation type="journal article" date="2008" name="PLoS ONE">
        <title>Comparative analysis of Acinetobacters: three genomes for three lifestyles.</title>
        <authorList>
            <person name="Vallenet D."/>
            <person name="Nordmann P."/>
            <person name="Barbe V."/>
            <person name="Poirel L."/>
            <person name="Mangenot S."/>
            <person name="Bataille E."/>
            <person name="Dossat C."/>
            <person name="Gas S."/>
            <person name="Kreimeyer A."/>
            <person name="Lenoble P."/>
            <person name="Oztas S."/>
            <person name="Poulain J."/>
            <person name="Segurens B."/>
            <person name="Robert C."/>
            <person name="Abergel C."/>
            <person name="Claverie J.-M."/>
            <person name="Raoult D."/>
            <person name="Medigue C."/>
            <person name="Weissenbach J."/>
            <person name="Cruveiller S."/>
        </authorList>
    </citation>
    <scope>NUCLEOTIDE SEQUENCE [LARGE SCALE GENOMIC DNA]</scope>
    <source>
        <strain>AYE</strain>
    </source>
</reference>
<evidence type="ECO:0000255" key="1">
    <source>
        <dbReference type="HAMAP-Rule" id="MF_01328"/>
    </source>
</evidence>
<evidence type="ECO:0000256" key="2">
    <source>
        <dbReference type="SAM" id="MobiDB-lite"/>
    </source>
</evidence>
<evidence type="ECO:0000305" key="3"/>
<gene>
    <name evidence="1" type="primary">rplD</name>
    <name type="ordered locus">ABAYE0409</name>
</gene>
<organism>
    <name type="scientific">Acinetobacter baumannii (strain AYE)</name>
    <dbReference type="NCBI Taxonomy" id="509173"/>
    <lineage>
        <taxon>Bacteria</taxon>
        <taxon>Pseudomonadati</taxon>
        <taxon>Pseudomonadota</taxon>
        <taxon>Gammaproteobacteria</taxon>
        <taxon>Moraxellales</taxon>
        <taxon>Moraxellaceae</taxon>
        <taxon>Acinetobacter</taxon>
        <taxon>Acinetobacter calcoaceticus/baumannii complex</taxon>
    </lineage>
</organism>
<feature type="chain" id="PRO_1000142065" description="Large ribosomal subunit protein uL4">
    <location>
        <begin position="1"/>
        <end position="200"/>
    </location>
</feature>
<feature type="region of interest" description="Disordered" evidence="2">
    <location>
        <begin position="42"/>
        <end position="65"/>
    </location>
</feature>